<keyword id="KW-0067">ATP-binding</keyword>
<keyword id="KW-0418">Kinase</keyword>
<keyword id="KW-0547">Nucleotide-binding</keyword>
<keyword id="KW-0597">Phosphoprotein</keyword>
<keyword id="KW-1185">Reference proteome</keyword>
<keyword id="KW-0808">Transferase</keyword>
<organism>
    <name type="scientific">Acaryochloris marina (strain MBIC 11017)</name>
    <dbReference type="NCBI Taxonomy" id="329726"/>
    <lineage>
        <taxon>Bacteria</taxon>
        <taxon>Bacillati</taxon>
        <taxon>Cyanobacteriota</taxon>
        <taxon>Cyanophyceae</taxon>
        <taxon>Acaryochloridales</taxon>
        <taxon>Acaryochloridaceae</taxon>
        <taxon>Acaryochloris</taxon>
    </lineage>
</organism>
<proteinExistence type="inferred from homology"/>
<feature type="chain" id="PRO_1000202404" description="Adenylyl-sulfate kinase">
    <location>
        <begin position="1"/>
        <end position="205"/>
    </location>
</feature>
<feature type="active site" description="Phosphoserine intermediate" evidence="1">
    <location>
        <position position="109"/>
    </location>
</feature>
<feature type="binding site" evidence="1">
    <location>
        <begin position="35"/>
        <end position="42"/>
    </location>
    <ligand>
        <name>ATP</name>
        <dbReference type="ChEBI" id="CHEBI:30616"/>
    </ligand>
</feature>
<evidence type="ECO:0000255" key="1">
    <source>
        <dbReference type="HAMAP-Rule" id="MF_00065"/>
    </source>
</evidence>
<protein>
    <recommendedName>
        <fullName evidence="1">Adenylyl-sulfate kinase</fullName>
        <ecNumber evidence="1">2.7.1.25</ecNumber>
    </recommendedName>
    <alternativeName>
        <fullName evidence="1">APS kinase</fullName>
    </alternativeName>
    <alternativeName>
        <fullName evidence="1">ATP adenosine-5'-phosphosulfate 3'-phosphotransferase</fullName>
    </alternativeName>
    <alternativeName>
        <fullName evidence="1">Adenosine-5'-phosphosulfate kinase</fullName>
    </alternativeName>
</protein>
<dbReference type="EC" id="2.7.1.25" evidence="1"/>
<dbReference type="EMBL" id="CP000828">
    <property type="protein sequence ID" value="ABW25463.1"/>
    <property type="molecule type" value="Genomic_DNA"/>
</dbReference>
<dbReference type="RefSeq" id="WP_012161073.1">
    <property type="nucleotide sequence ID" value="NC_009925.1"/>
</dbReference>
<dbReference type="SMR" id="B0CAX3"/>
<dbReference type="STRING" id="329726.AM1_0406"/>
<dbReference type="KEGG" id="amr:AM1_0406"/>
<dbReference type="eggNOG" id="COG0529">
    <property type="taxonomic scope" value="Bacteria"/>
</dbReference>
<dbReference type="HOGENOM" id="CLU_046932_1_0_3"/>
<dbReference type="OrthoDB" id="9804504at2"/>
<dbReference type="UniPathway" id="UPA00140">
    <property type="reaction ID" value="UER00205"/>
</dbReference>
<dbReference type="Proteomes" id="UP000000268">
    <property type="component" value="Chromosome"/>
</dbReference>
<dbReference type="GO" id="GO:0004020">
    <property type="term" value="F:adenylylsulfate kinase activity"/>
    <property type="evidence" value="ECO:0007669"/>
    <property type="project" value="UniProtKB-UniRule"/>
</dbReference>
<dbReference type="GO" id="GO:0005524">
    <property type="term" value="F:ATP binding"/>
    <property type="evidence" value="ECO:0007669"/>
    <property type="project" value="UniProtKB-UniRule"/>
</dbReference>
<dbReference type="GO" id="GO:0070814">
    <property type="term" value="P:hydrogen sulfide biosynthetic process"/>
    <property type="evidence" value="ECO:0007669"/>
    <property type="project" value="UniProtKB-UniRule"/>
</dbReference>
<dbReference type="GO" id="GO:0000103">
    <property type="term" value="P:sulfate assimilation"/>
    <property type="evidence" value="ECO:0007669"/>
    <property type="project" value="UniProtKB-UniRule"/>
</dbReference>
<dbReference type="CDD" id="cd02027">
    <property type="entry name" value="APSK"/>
    <property type="match status" value="1"/>
</dbReference>
<dbReference type="FunFam" id="3.40.50.300:FF:000212">
    <property type="entry name" value="Adenylyl-sulfate kinase"/>
    <property type="match status" value="1"/>
</dbReference>
<dbReference type="Gene3D" id="3.40.50.300">
    <property type="entry name" value="P-loop containing nucleotide triphosphate hydrolases"/>
    <property type="match status" value="1"/>
</dbReference>
<dbReference type="HAMAP" id="MF_00065">
    <property type="entry name" value="Adenylyl_sulf_kinase"/>
    <property type="match status" value="1"/>
</dbReference>
<dbReference type="InterPro" id="IPR002891">
    <property type="entry name" value="APS_kinase"/>
</dbReference>
<dbReference type="InterPro" id="IPR027417">
    <property type="entry name" value="P-loop_NTPase"/>
</dbReference>
<dbReference type="NCBIfam" id="TIGR00455">
    <property type="entry name" value="apsK"/>
    <property type="match status" value="1"/>
</dbReference>
<dbReference type="NCBIfam" id="NF003013">
    <property type="entry name" value="PRK03846.1"/>
    <property type="match status" value="1"/>
</dbReference>
<dbReference type="PANTHER" id="PTHR11055">
    <property type="entry name" value="BIFUNCTIONAL 3'-PHOSPHOADENOSINE 5'-PHOSPHOSULFATE SYNTHASE"/>
    <property type="match status" value="1"/>
</dbReference>
<dbReference type="PANTHER" id="PTHR11055:SF1">
    <property type="entry name" value="PAPS SYNTHETASE, ISOFORM D"/>
    <property type="match status" value="1"/>
</dbReference>
<dbReference type="Pfam" id="PF01583">
    <property type="entry name" value="APS_kinase"/>
    <property type="match status" value="1"/>
</dbReference>
<dbReference type="SUPFAM" id="SSF52540">
    <property type="entry name" value="P-loop containing nucleoside triphosphate hydrolases"/>
    <property type="match status" value="1"/>
</dbReference>
<comment type="function">
    <text evidence="1">Catalyzes the synthesis of activated sulfate.</text>
</comment>
<comment type="catalytic activity">
    <reaction evidence="1">
        <text>adenosine 5'-phosphosulfate + ATP = 3'-phosphoadenylyl sulfate + ADP + H(+)</text>
        <dbReference type="Rhea" id="RHEA:24152"/>
        <dbReference type="ChEBI" id="CHEBI:15378"/>
        <dbReference type="ChEBI" id="CHEBI:30616"/>
        <dbReference type="ChEBI" id="CHEBI:58243"/>
        <dbReference type="ChEBI" id="CHEBI:58339"/>
        <dbReference type="ChEBI" id="CHEBI:456216"/>
        <dbReference type="EC" id="2.7.1.25"/>
    </reaction>
</comment>
<comment type="pathway">
    <text evidence="1">Sulfur metabolism; hydrogen sulfide biosynthesis; sulfite from sulfate: step 2/3.</text>
</comment>
<comment type="similarity">
    <text evidence="1">Belongs to the APS kinase family.</text>
</comment>
<reference key="1">
    <citation type="journal article" date="2008" name="Proc. Natl. Acad. Sci. U.S.A.">
        <title>Niche adaptation and genome expansion in the chlorophyll d-producing cyanobacterium Acaryochloris marina.</title>
        <authorList>
            <person name="Swingley W.D."/>
            <person name="Chen M."/>
            <person name="Cheung P.C."/>
            <person name="Conrad A.L."/>
            <person name="Dejesa L.C."/>
            <person name="Hao J."/>
            <person name="Honchak B.M."/>
            <person name="Karbach L.E."/>
            <person name="Kurdoglu A."/>
            <person name="Lahiri S."/>
            <person name="Mastrian S.D."/>
            <person name="Miyashita H."/>
            <person name="Page L."/>
            <person name="Ramakrishna P."/>
            <person name="Satoh S."/>
            <person name="Sattley W.M."/>
            <person name="Shimada Y."/>
            <person name="Taylor H.L."/>
            <person name="Tomo T."/>
            <person name="Tsuchiya T."/>
            <person name="Wang Z.T."/>
            <person name="Raymond J."/>
            <person name="Mimuro M."/>
            <person name="Blankenship R.E."/>
            <person name="Touchman J.W."/>
        </authorList>
    </citation>
    <scope>NUCLEOTIDE SEQUENCE [LARGE SCALE GENOMIC DNA]</scope>
    <source>
        <strain>MBIC 11017</strain>
    </source>
</reference>
<gene>
    <name evidence="1" type="primary">cysC</name>
    <name type="ordered locus">AM1_0406</name>
</gene>
<accession>B0CAX3</accession>
<sequence length="205" mass="22861">MIMKSSNVVWHKSTVTRQNRQEQNGHLSTILWFTGLSGAGKSTLAHTVEDALSKMNCRTFVIDGDNIRHGLCADLGFSSEDRVENIRRIGEVAKLFTEAGIIVLSAFISPFRADRDRVRELVPEGDFIEIYCQASLEVCEERDVKGLYKKARSGEIPNFTGISSPYEPPEEPEIIVKTGEDSLEVCAQQVIEFLQERGIVQPTSA</sequence>
<name>CYSC_ACAM1</name>